<proteinExistence type="inferred from homology"/>
<reference key="1">
    <citation type="journal article" date="1999" name="Nature">
        <title>Evidence for lateral gene transfer between Archaea and Bacteria from genome sequence of Thermotoga maritima.</title>
        <authorList>
            <person name="Nelson K.E."/>
            <person name="Clayton R.A."/>
            <person name="Gill S.R."/>
            <person name="Gwinn M.L."/>
            <person name="Dodson R.J."/>
            <person name="Haft D.H."/>
            <person name="Hickey E.K."/>
            <person name="Peterson J.D."/>
            <person name="Nelson W.C."/>
            <person name="Ketchum K.A."/>
            <person name="McDonald L.A."/>
            <person name="Utterback T.R."/>
            <person name="Malek J.A."/>
            <person name="Linher K.D."/>
            <person name="Garrett M.M."/>
            <person name="Stewart A.M."/>
            <person name="Cotton M.D."/>
            <person name="Pratt M.S."/>
            <person name="Phillips C.A."/>
            <person name="Richardson D.L."/>
            <person name="Heidelberg J.F."/>
            <person name="Sutton G.G."/>
            <person name="Fleischmann R.D."/>
            <person name="Eisen J.A."/>
            <person name="White O."/>
            <person name="Salzberg S.L."/>
            <person name="Smith H.O."/>
            <person name="Venter J.C."/>
            <person name="Fraser C.M."/>
        </authorList>
    </citation>
    <scope>NUCLEOTIDE SEQUENCE [LARGE SCALE GENOMIC DNA]</scope>
    <source>
        <strain>ATCC 43589 / DSM 3109 / JCM 10099 / NBRC 100826 / MSB8</strain>
    </source>
</reference>
<accession>Q9X1R0</accession>
<protein>
    <recommendedName>
        <fullName evidence="1">tRNA pseudouridine synthase A</fullName>
        <ecNumber evidence="1">5.4.99.12</ecNumber>
    </recommendedName>
    <alternativeName>
        <fullName evidence="1">tRNA pseudouridine(38-40) synthase</fullName>
    </alternativeName>
    <alternativeName>
        <fullName evidence="1">tRNA pseudouridylate synthase I</fullName>
    </alternativeName>
    <alternativeName>
        <fullName evidence="1">tRNA-uridine isomerase I</fullName>
    </alternativeName>
</protein>
<dbReference type="EC" id="5.4.99.12" evidence="1"/>
<dbReference type="EMBL" id="AE000512">
    <property type="protein sequence ID" value="AAD36641.1"/>
    <property type="molecule type" value="Genomic_DNA"/>
</dbReference>
<dbReference type="PIR" id="G72237">
    <property type="entry name" value="G72237"/>
</dbReference>
<dbReference type="RefSeq" id="NP_229374.1">
    <property type="nucleotide sequence ID" value="NC_000853.1"/>
</dbReference>
<dbReference type="RefSeq" id="WP_004081995.1">
    <property type="nucleotide sequence ID" value="NC_000853.1"/>
</dbReference>
<dbReference type="SMR" id="Q9X1R0"/>
<dbReference type="FunCoup" id="Q9X1R0">
    <property type="interactions" value="387"/>
</dbReference>
<dbReference type="STRING" id="243274.TM_1574"/>
<dbReference type="PaxDb" id="243274-THEMA_06410"/>
<dbReference type="EnsemblBacteria" id="AAD36641">
    <property type="protein sequence ID" value="AAD36641"/>
    <property type="gene ID" value="TM_1574"/>
</dbReference>
<dbReference type="KEGG" id="tma:TM1574"/>
<dbReference type="KEGG" id="tmi:THEMA_06410"/>
<dbReference type="KEGG" id="tmm:Tmari_1582"/>
<dbReference type="KEGG" id="tmw:THMA_1609"/>
<dbReference type="eggNOG" id="COG0101">
    <property type="taxonomic scope" value="Bacteria"/>
</dbReference>
<dbReference type="InParanoid" id="Q9X1R0"/>
<dbReference type="OrthoDB" id="9811823at2"/>
<dbReference type="Proteomes" id="UP000008183">
    <property type="component" value="Chromosome"/>
</dbReference>
<dbReference type="GO" id="GO:0009982">
    <property type="term" value="F:pseudouridine synthase activity"/>
    <property type="evidence" value="ECO:0000318"/>
    <property type="project" value="GO_Central"/>
</dbReference>
<dbReference type="GO" id="GO:0003723">
    <property type="term" value="F:RNA binding"/>
    <property type="evidence" value="ECO:0007669"/>
    <property type="project" value="InterPro"/>
</dbReference>
<dbReference type="GO" id="GO:0160147">
    <property type="term" value="F:tRNA pseudouridine(38-40) synthase activity"/>
    <property type="evidence" value="ECO:0007669"/>
    <property type="project" value="UniProtKB-EC"/>
</dbReference>
<dbReference type="GO" id="GO:0031119">
    <property type="term" value="P:tRNA pseudouridine synthesis"/>
    <property type="evidence" value="ECO:0000318"/>
    <property type="project" value="GO_Central"/>
</dbReference>
<dbReference type="CDD" id="cd02570">
    <property type="entry name" value="PseudoU_synth_EcTruA"/>
    <property type="match status" value="1"/>
</dbReference>
<dbReference type="FunFam" id="3.30.70.580:FF:000001">
    <property type="entry name" value="tRNA pseudouridine synthase A"/>
    <property type="match status" value="1"/>
</dbReference>
<dbReference type="FunFam" id="3.30.70.660:FF:000026">
    <property type="entry name" value="tRNA pseudouridine synthase A"/>
    <property type="match status" value="1"/>
</dbReference>
<dbReference type="Gene3D" id="3.30.70.660">
    <property type="entry name" value="Pseudouridine synthase I, catalytic domain, C-terminal subdomain"/>
    <property type="match status" value="1"/>
</dbReference>
<dbReference type="Gene3D" id="3.30.70.580">
    <property type="entry name" value="Pseudouridine synthase I, catalytic domain, N-terminal subdomain"/>
    <property type="match status" value="1"/>
</dbReference>
<dbReference type="HAMAP" id="MF_00171">
    <property type="entry name" value="TruA"/>
    <property type="match status" value="1"/>
</dbReference>
<dbReference type="InterPro" id="IPR020103">
    <property type="entry name" value="PsdUridine_synth_cat_dom_sf"/>
</dbReference>
<dbReference type="InterPro" id="IPR001406">
    <property type="entry name" value="PsdUridine_synth_TruA"/>
</dbReference>
<dbReference type="InterPro" id="IPR020097">
    <property type="entry name" value="PsdUridine_synth_TruA_a/b_dom"/>
</dbReference>
<dbReference type="InterPro" id="IPR020095">
    <property type="entry name" value="PsdUridine_synth_TruA_C"/>
</dbReference>
<dbReference type="InterPro" id="IPR020094">
    <property type="entry name" value="TruA/RsuA/RluB/E/F_N"/>
</dbReference>
<dbReference type="NCBIfam" id="TIGR00071">
    <property type="entry name" value="hisT_truA"/>
    <property type="match status" value="1"/>
</dbReference>
<dbReference type="PANTHER" id="PTHR11142">
    <property type="entry name" value="PSEUDOURIDYLATE SYNTHASE"/>
    <property type="match status" value="1"/>
</dbReference>
<dbReference type="PANTHER" id="PTHR11142:SF0">
    <property type="entry name" value="TRNA PSEUDOURIDINE SYNTHASE-LIKE 1"/>
    <property type="match status" value="1"/>
</dbReference>
<dbReference type="Pfam" id="PF01416">
    <property type="entry name" value="PseudoU_synth_1"/>
    <property type="match status" value="2"/>
</dbReference>
<dbReference type="PIRSF" id="PIRSF001430">
    <property type="entry name" value="tRNA_psdUrid_synth"/>
    <property type="match status" value="1"/>
</dbReference>
<dbReference type="SUPFAM" id="SSF55120">
    <property type="entry name" value="Pseudouridine synthase"/>
    <property type="match status" value="1"/>
</dbReference>
<evidence type="ECO:0000255" key="1">
    <source>
        <dbReference type="HAMAP-Rule" id="MF_00171"/>
    </source>
</evidence>
<feature type="chain" id="PRO_0000057474" description="tRNA pseudouridine synthase A">
    <location>
        <begin position="1"/>
        <end position="245"/>
    </location>
</feature>
<feature type="active site" description="Nucleophile" evidence="1">
    <location>
        <position position="52"/>
    </location>
</feature>
<feature type="binding site" evidence="1">
    <location>
        <position position="111"/>
    </location>
    <ligand>
        <name>substrate</name>
    </ligand>
</feature>
<organism>
    <name type="scientific">Thermotoga maritima (strain ATCC 43589 / DSM 3109 / JCM 10099 / NBRC 100826 / MSB8)</name>
    <dbReference type="NCBI Taxonomy" id="243274"/>
    <lineage>
        <taxon>Bacteria</taxon>
        <taxon>Thermotogati</taxon>
        <taxon>Thermotogota</taxon>
        <taxon>Thermotogae</taxon>
        <taxon>Thermotogales</taxon>
        <taxon>Thermotogaceae</taxon>
        <taxon>Thermotoga</taxon>
    </lineage>
</organism>
<comment type="function">
    <text evidence="1">Formation of pseudouridine at positions 38, 39 and 40 in the anticodon stem and loop of transfer RNAs.</text>
</comment>
<comment type="catalytic activity">
    <reaction evidence="1">
        <text>uridine(38/39/40) in tRNA = pseudouridine(38/39/40) in tRNA</text>
        <dbReference type="Rhea" id="RHEA:22376"/>
        <dbReference type="Rhea" id="RHEA-COMP:10085"/>
        <dbReference type="Rhea" id="RHEA-COMP:10087"/>
        <dbReference type="ChEBI" id="CHEBI:65314"/>
        <dbReference type="ChEBI" id="CHEBI:65315"/>
        <dbReference type="EC" id="5.4.99.12"/>
    </reaction>
</comment>
<comment type="subunit">
    <text evidence="1">Homodimer.</text>
</comment>
<comment type="similarity">
    <text evidence="1">Belongs to the tRNA pseudouridine synthase TruA family.</text>
</comment>
<gene>
    <name evidence="1" type="primary">truA</name>
    <name type="ordered locus">TM_1574</name>
</gene>
<name>TRUA_THEMA</name>
<keyword id="KW-0413">Isomerase</keyword>
<keyword id="KW-1185">Reference proteome</keyword>
<keyword id="KW-0819">tRNA processing</keyword>
<sequence>MKRVAAVIEYDGSNFFGYQGQPDVRTVQGVIEDALERIFKQRIYTQAAGRTDTGVHANGQLIAFNCPNDRMTTEDIRNAMNANLPDDVYVKEVFEVPVNFHPRFDVTKRIYHYFILTSRQKNVFLRKYVWWFPYELDLDAMRKAVKYLEGTHDFTSFKTGSDERDPVRTIYRIRILRLKNDLVLIRVEGRSFLRRMVRNIVAALVKVGLKQWEPEKMKEVLEARDRSAAAGTAPAHGLYFYKVLF</sequence>